<name>SYW_XANAC</name>
<protein>
    <recommendedName>
        <fullName evidence="1">Tryptophan--tRNA ligase</fullName>
        <ecNumber evidence="1">6.1.1.2</ecNumber>
    </recommendedName>
    <alternativeName>
        <fullName evidence="1">Tryptophanyl-tRNA synthetase</fullName>
        <shortName evidence="1">TrpRS</shortName>
    </alternativeName>
</protein>
<feature type="chain" id="PRO_0000136712" description="Tryptophan--tRNA ligase">
    <location>
        <begin position="1"/>
        <end position="432"/>
    </location>
</feature>
<feature type="short sequence motif" description="'HIGH' region" evidence="1">
    <location>
        <begin position="14"/>
        <end position="22"/>
    </location>
</feature>
<feature type="short sequence motif" description="'KMSKS' region" evidence="1">
    <location>
        <begin position="205"/>
        <end position="209"/>
    </location>
</feature>
<feature type="binding site" evidence="1">
    <location>
        <begin position="13"/>
        <end position="15"/>
    </location>
    <ligand>
        <name>ATP</name>
        <dbReference type="ChEBI" id="CHEBI:30616"/>
    </ligand>
</feature>
<feature type="binding site" evidence="1">
    <location>
        <begin position="21"/>
        <end position="22"/>
    </location>
    <ligand>
        <name>ATP</name>
        <dbReference type="ChEBI" id="CHEBI:30616"/>
    </ligand>
</feature>
<feature type="binding site" evidence="1">
    <location>
        <position position="146"/>
    </location>
    <ligand>
        <name>L-tryptophan</name>
        <dbReference type="ChEBI" id="CHEBI:57912"/>
    </ligand>
</feature>
<feature type="binding site" evidence="1">
    <location>
        <begin position="158"/>
        <end position="160"/>
    </location>
    <ligand>
        <name>ATP</name>
        <dbReference type="ChEBI" id="CHEBI:30616"/>
    </ligand>
</feature>
<feature type="binding site" evidence="1">
    <location>
        <position position="198"/>
    </location>
    <ligand>
        <name>ATP</name>
        <dbReference type="ChEBI" id="CHEBI:30616"/>
    </ligand>
</feature>
<feature type="binding site" evidence="1">
    <location>
        <begin position="205"/>
        <end position="209"/>
    </location>
    <ligand>
        <name>ATP</name>
        <dbReference type="ChEBI" id="CHEBI:30616"/>
    </ligand>
</feature>
<evidence type="ECO:0000255" key="1">
    <source>
        <dbReference type="HAMAP-Rule" id="MF_00140"/>
    </source>
</evidence>
<reference key="1">
    <citation type="journal article" date="2002" name="Nature">
        <title>Comparison of the genomes of two Xanthomonas pathogens with differing host specificities.</title>
        <authorList>
            <person name="da Silva A.C.R."/>
            <person name="Ferro J.A."/>
            <person name="Reinach F.C."/>
            <person name="Farah C.S."/>
            <person name="Furlan L.R."/>
            <person name="Quaggio R.B."/>
            <person name="Monteiro-Vitorello C.B."/>
            <person name="Van Sluys M.A."/>
            <person name="Almeida N.F. Jr."/>
            <person name="Alves L.M.C."/>
            <person name="do Amaral A.M."/>
            <person name="Bertolini M.C."/>
            <person name="Camargo L.E.A."/>
            <person name="Camarotte G."/>
            <person name="Cannavan F."/>
            <person name="Cardozo J."/>
            <person name="Chambergo F."/>
            <person name="Ciapina L.P."/>
            <person name="Cicarelli R.M.B."/>
            <person name="Coutinho L.L."/>
            <person name="Cursino-Santos J.R."/>
            <person name="El-Dorry H."/>
            <person name="Faria J.B."/>
            <person name="Ferreira A.J.S."/>
            <person name="Ferreira R.C.C."/>
            <person name="Ferro M.I.T."/>
            <person name="Formighieri E.F."/>
            <person name="Franco M.C."/>
            <person name="Greggio C.C."/>
            <person name="Gruber A."/>
            <person name="Katsuyama A.M."/>
            <person name="Kishi L.T."/>
            <person name="Leite R.P."/>
            <person name="Lemos E.G.M."/>
            <person name="Lemos M.V.F."/>
            <person name="Locali E.C."/>
            <person name="Machado M.A."/>
            <person name="Madeira A.M.B.N."/>
            <person name="Martinez-Rossi N.M."/>
            <person name="Martins E.C."/>
            <person name="Meidanis J."/>
            <person name="Menck C.F.M."/>
            <person name="Miyaki C.Y."/>
            <person name="Moon D.H."/>
            <person name="Moreira L.M."/>
            <person name="Novo M.T.M."/>
            <person name="Okura V.K."/>
            <person name="Oliveira M.C."/>
            <person name="Oliveira V.R."/>
            <person name="Pereira H.A."/>
            <person name="Rossi A."/>
            <person name="Sena J.A.D."/>
            <person name="Silva C."/>
            <person name="de Souza R.F."/>
            <person name="Spinola L.A.F."/>
            <person name="Takita M.A."/>
            <person name="Tamura R.E."/>
            <person name="Teixeira E.C."/>
            <person name="Tezza R.I.D."/>
            <person name="Trindade dos Santos M."/>
            <person name="Truffi D."/>
            <person name="Tsai S.M."/>
            <person name="White F.F."/>
            <person name="Setubal J.C."/>
            <person name="Kitajima J.P."/>
        </authorList>
    </citation>
    <scope>NUCLEOTIDE SEQUENCE [LARGE SCALE GENOMIC DNA]</scope>
    <source>
        <strain>306</strain>
    </source>
</reference>
<dbReference type="EC" id="6.1.1.2" evidence="1"/>
<dbReference type="EMBL" id="AE008923">
    <property type="protein sequence ID" value="AAM38842.1"/>
    <property type="molecule type" value="Genomic_DNA"/>
</dbReference>
<dbReference type="SMR" id="Q8PFH5"/>
<dbReference type="KEGG" id="xac:XAC4006"/>
<dbReference type="eggNOG" id="COG0180">
    <property type="taxonomic scope" value="Bacteria"/>
</dbReference>
<dbReference type="HOGENOM" id="CLU_029244_5_1_6"/>
<dbReference type="Proteomes" id="UP000000576">
    <property type="component" value="Chromosome"/>
</dbReference>
<dbReference type="GO" id="GO:0005829">
    <property type="term" value="C:cytosol"/>
    <property type="evidence" value="ECO:0007669"/>
    <property type="project" value="TreeGrafter"/>
</dbReference>
<dbReference type="GO" id="GO:0005524">
    <property type="term" value="F:ATP binding"/>
    <property type="evidence" value="ECO:0007669"/>
    <property type="project" value="UniProtKB-UniRule"/>
</dbReference>
<dbReference type="GO" id="GO:0004830">
    <property type="term" value="F:tryptophan-tRNA ligase activity"/>
    <property type="evidence" value="ECO:0007669"/>
    <property type="project" value="UniProtKB-UniRule"/>
</dbReference>
<dbReference type="GO" id="GO:0006436">
    <property type="term" value="P:tryptophanyl-tRNA aminoacylation"/>
    <property type="evidence" value="ECO:0007669"/>
    <property type="project" value="UniProtKB-UniRule"/>
</dbReference>
<dbReference type="CDD" id="cd00806">
    <property type="entry name" value="TrpRS_core"/>
    <property type="match status" value="1"/>
</dbReference>
<dbReference type="FunFam" id="1.10.240.10:FF:000005">
    <property type="entry name" value="Tryptophan--tRNA ligase"/>
    <property type="match status" value="1"/>
</dbReference>
<dbReference type="FunFam" id="3.40.50.620:FF:000144">
    <property type="entry name" value="Tryptophan--tRNA ligase"/>
    <property type="match status" value="1"/>
</dbReference>
<dbReference type="Gene3D" id="2.30.29.80">
    <property type="match status" value="1"/>
</dbReference>
<dbReference type="Gene3D" id="3.40.50.620">
    <property type="entry name" value="HUPs"/>
    <property type="match status" value="1"/>
</dbReference>
<dbReference type="Gene3D" id="1.10.240.10">
    <property type="entry name" value="Tyrosyl-Transfer RNA Synthetase"/>
    <property type="match status" value="1"/>
</dbReference>
<dbReference type="HAMAP" id="MF_00140_B">
    <property type="entry name" value="Trp_tRNA_synth_B"/>
    <property type="match status" value="1"/>
</dbReference>
<dbReference type="InterPro" id="IPR002305">
    <property type="entry name" value="aa-tRNA-synth_Ic"/>
</dbReference>
<dbReference type="InterPro" id="IPR014729">
    <property type="entry name" value="Rossmann-like_a/b/a_fold"/>
</dbReference>
<dbReference type="InterPro" id="IPR002306">
    <property type="entry name" value="Trp-tRNA-ligase"/>
</dbReference>
<dbReference type="InterPro" id="IPR024109">
    <property type="entry name" value="Trp-tRNA-ligase_bac-type"/>
</dbReference>
<dbReference type="InterPro" id="IPR050203">
    <property type="entry name" value="Trp-tRNA_synthetase"/>
</dbReference>
<dbReference type="InterPro" id="IPR036913">
    <property type="entry name" value="YegP-like_sf"/>
</dbReference>
<dbReference type="NCBIfam" id="NF008923">
    <property type="entry name" value="PRK12284.1"/>
    <property type="match status" value="1"/>
</dbReference>
<dbReference type="NCBIfam" id="TIGR00233">
    <property type="entry name" value="trpS"/>
    <property type="match status" value="1"/>
</dbReference>
<dbReference type="PANTHER" id="PTHR43766">
    <property type="entry name" value="TRYPTOPHAN--TRNA LIGASE, MITOCHONDRIAL"/>
    <property type="match status" value="1"/>
</dbReference>
<dbReference type="PANTHER" id="PTHR43766:SF1">
    <property type="entry name" value="TRYPTOPHAN--TRNA LIGASE, MITOCHONDRIAL"/>
    <property type="match status" value="1"/>
</dbReference>
<dbReference type="Pfam" id="PF00579">
    <property type="entry name" value="tRNA-synt_1b"/>
    <property type="match status" value="1"/>
</dbReference>
<dbReference type="PRINTS" id="PR01039">
    <property type="entry name" value="TRNASYNTHTRP"/>
</dbReference>
<dbReference type="SUPFAM" id="SSF52374">
    <property type="entry name" value="Nucleotidylyl transferase"/>
    <property type="match status" value="1"/>
</dbReference>
<dbReference type="SUPFAM" id="SSF160113">
    <property type="entry name" value="YegP-like"/>
    <property type="match status" value="1"/>
</dbReference>
<organism>
    <name type="scientific">Xanthomonas axonopodis pv. citri (strain 306)</name>
    <dbReference type="NCBI Taxonomy" id="190486"/>
    <lineage>
        <taxon>Bacteria</taxon>
        <taxon>Pseudomonadati</taxon>
        <taxon>Pseudomonadota</taxon>
        <taxon>Gammaproteobacteria</taxon>
        <taxon>Lysobacterales</taxon>
        <taxon>Lysobacteraceae</taxon>
        <taxon>Xanthomonas</taxon>
    </lineage>
</organism>
<keyword id="KW-0030">Aminoacyl-tRNA synthetase</keyword>
<keyword id="KW-0067">ATP-binding</keyword>
<keyword id="KW-0963">Cytoplasm</keyword>
<keyword id="KW-0436">Ligase</keyword>
<keyword id="KW-0547">Nucleotide-binding</keyword>
<keyword id="KW-0648">Protein biosynthesis</keyword>
<comment type="function">
    <text evidence="1">Catalyzes the attachment of tryptophan to tRNA(Trp).</text>
</comment>
<comment type="catalytic activity">
    <reaction evidence="1">
        <text>tRNA(Trp) + L-tryptophan + ATP = L-tryptophyl-tRNA(Trp) + AMP + diphosphate + H(+)</text>
        <dbReference type="Rhea" id="RHEA:24080"/>
        <dbReference type="Rhea" id="RHEA-COMP:9671"/>
        <dbReference type="Rhea" id="RHEA-COMP:9705"/>
        <dbReference type="ChEBI" id="CHEBI:15378"/>
        <dbReference type="ChEBI" id="CHEBI:30616"/>
        <dbReference type="ChEBI" id="CHEBI:33019"/>
        <dbReference type="ChEBI" id="CHEBI:57912"/>
        <dbReference type="ChEBI" id="CHEBI:78442"/>
        <dbReference type="ChEBI" id="CHEBI:78535"/>
        <dbReference type="ChEBI" id="CHEBI:456215"/>
        <dbReference type="EC" id="6.1.1.2"/>
    </reaction>
</comment>
<comment type="subunit">
    <text evidence="1">Homodimer.</text>
</comment>
<comment type="subcellular location">
    <subcellularLocation>
        <location evidence="1">Cytoplasm</location>
    </subcellularLocation>
</comment>
<comment type="similarity">
    <text evidence="1">Belongs to the class-I aminoacyl-tRNA synthetase family.</text>
</comment>
<proteinExistence type="inferred from homology"/>
<accession>Q8PFH5</accession>
<sequence length="432" mass="47044">MTSMTTRVLTGITTSGTPHLGNYVGAIRPAIQASAGADAESFYFLADLHSLIKAQDPARTQRSTLEIAATWLACGLDPDKVWFYRQSDVPETTELMWLLTCVAGKGILNRAHAYKAAVDRNRADGEDEDAGVTAGLFMYPVLMAADILIFNAHQVPVGRDQIQHIEMARDFAQRFNHVYGREFFTLPEAVIDEQVSTLPGLDGRKMSKSYGNTIPLFAPREELRKLVFSILTDSRAPGQAKDTQGSALFQLYQAFATPQESAAFAQAFADGIGWGDAKQQVFERIDQEIAPLRTRYEGLIAEPARIEAILRAGGARLRARYATPLLAELRDAVGLRDLSSQAATAAVHASEKIALPVFKQYRESDGQFYFKLNDGAGALLLQSDGFASPRDAGQVIARLKQAAQASDLQLPGVHAQVDADVVLAAMDALREA</sequence>
<gene>
    <name evidence="1" type="primary">trpS</name>
    <name type="ordered locus">XAC4006</name>
</gene>